<comment type="function">
    <text evidence="1">Transpeptidase that recognizes and modifies its substrate by proteolytic cleavage of a sorting signal. Following cleavage, a covalent intermediate is formed via a thioester bond between the archaeosortase and its substrate, which is then transferred and covalently attached to the cell membrane.</text>
</comment>
<comment type="subcellular location">
    <subcellularLocation>
        <location evidence="4">Cell membrane</location>
        <topology evidence="2">Multi-pass membrane protein</topology>
    </subcellularLocation>
</comment>
<comment type="similarity">
    <text evidence="5">Belongs to the exosortase/archaeosortase family. Archaeosortase D subfamily.</text>
</comment>
<feature type="chain" id="PRO_0000107355" description="Probable archaeosortase D">
    <location>
        <begin position="1"/>
        <end position="154"/>
    </location>
</feature>
<feature type="transmembrane region" description="Helical" evidence="2">
    <location>
        <begin position="6"/>
        <end position="26"/>
    </location>
</feature>
<feature type="transmembrane region" description="Helical" evidence="2">
    <location>
        <begin position="57"/>
        <end position="77"/>
    </location>
</feature>
<feature type="transmembrane region" description="Helical" evidence="2">
    <location>
        <begin position="91"/>
        <end position="111"/>
    </location>
</feature>
<feature type="transmembrane region" description="Helical" evidence="2">
    <location>
        <begin position="125"/>
        <end position="145"/>
    </location>
</feature>
<feature type="active site" description="Acyl-thioester intermediate" evidence="1">
    <location>
        <position position="64"/>
    </location>
</feature>
<feature type="active site" description="Proton donor" evidence="1">
    <location>
        <position position="106"/>
    </location>
</feature>
<accession>P81329</accession>
<sequence length="154" mass="18128">MGNKNAIYILRFLIYFFIFYYILKMLEGNIMDLLTITLSKLLNLKFYKNEIIVGKNIIEISSPCTCSLEMALFLGYIFGTPDVPIKYKISYSVFGLSIITISNILRIILIINYSNMINYNVVHDVISFIIFPIALFLNWFWIYLLKMKKIIMFK</sequence>
<organism>
    <name type="scientific">Methanocaldococcus jannaschii (strain ATCC 43067 / DSM 2661 / JAL-1 / JCM 10045 / NBRC 100440)</name>
    <name type="common">Methanococcus jannaschii</name>
    <dbReference type="NCBI Taxonomy" id="243232"/>
    <lineage>
        <taxon>Archaea</taxon>
        <taxon>Methanobacteriati</taxon>
        <taxon>Methanobacteriota</taxon>
        <taxon>Methanomada group</taxon>
        <taxon>Methanococci</taxon>
        <taxon>Methanococcales</taxon>
        <taxon>Methanocaldococcaceae</taxon>
        <taxon>Methanocaldococcus</taxon>
    </lineage>
</organism>
<dbReference type="EC" id="3.4.22.-" evidence="1"/>
<dbReference type="EMBL" id="L77117">
    <property type="protein sequence ID" value="AAB99490.1"/>
    <property type="molecule type" value="Genomic_DNA"/>
</dbReference>
<dbReference type="RefSeq" id="WP_010870990.1">
    <property type="nucleotide sequence ID" value="NC_000909.1"/>
</dbReference>
<dbReference type="FunCoup" id="P81329">
    <property type="interactions" value="1"/>
</dbReference>
<dbReference type="STRING" id="243232.MJ_1469.1"/>
<dbReference type="TCDB" id="9.B.297.3.1">
    <property type="family name" value="the archaeosortase/exosortase/rhomosortase (sortase) family"/>
</dbReference>
<dbReference type="PaxDb" id="243232-MJ_1469.1"/>
<dbReference type="EnsemblBacteria" id="AAB99490">
    <property type="protein sequence ID" value="AAB99490"/>
    <property type="gene ID" value="MJ_1469.1"/>
</dbReference>
<dbReference type="GeneID" id="1452374"/>
<dbReference type="KEGG" id="mja:MJ_1469.1"/>
<dbReference type="eggNOG" id="arCOG04471">
    <property type="taxonomic scope" value="Archaea"/>
</dbReference>
<dbReference type="HOGENOM" id="CLU_1599045_0_0_2"/>
<dbReference type="InParanoid" id="P81329"/>
<dbReference type="OrthoDB" id="66119at2157"/>
<dbReference type="Proteomes" id="UP000000805">
    <property type="component" value="Chromosome"/>
</dbReference>
<dbReference type="GO" id="GO:0005886">
    <property type="term" value="C:plasma membrane"/>
    <property type="evidence" value="ECO:0007669"/>
    <property type="project" value="UniProtKB-SubCell"/>
</dbReference>
<dbReference type="GO" id="GO:0008233">
    <property type="term" value="F:peptidase activity"/>
    <property type="evidence" value="ECO:0007669"/>
    <property type="project" value="UniProtKB-KW"/>
</dbReference>
<dbReference type="GO" id="GO:0006508">
    <property type="term" value="P:proteolysis"/>
    <property type="evidence" value="ECO:0007669"/>
    <property type="project" value="UniProtKB-KW"/>
</dbReference>
<dbReference type="InterPro" id="IPR026432">
    <property type="entry name" value="Archaeo_ArtD"/>
</dbReference>
<dbReference type="InterPro" id="IPR026392">
    <property type="entry name" value="Exo/Archaeosortase_dom"/>
</dbReference>
<dbReference type="NCBIfam" id="TIGR04175">
    <property type="entry name" value="archaeo_artD"/>
    <property type="match status" value="1"/>
</dbReference>
<dbReference type="NCBIfam" id="TIGR04178">
    <property type="entry name" value="exo_archaeo"/>
    <property type="match status" value="1"/>
</dbReference>
<keyword id="KW-1003">Cell membrane</keyword>
<keyword id="KW-0378">Hydrolase</keyword>
<keyword id="KW-0472">Membrane</keyword>
<keyword id="KW-0645">Protease</keyword>
<keyword id="KW-1185">Reference proteome</keyword>
<keyword id="KW-0812">Transmembrane</keyword>
<keyword id="KW-1133">Transmembrane helix</keyword>
<proteinExistence type="inferred from homology"/>
<protein>
    <recommendedName>
        <fullName evidence="3">Probable archaeosortase D</fullName>
        <ecNumber evidence="1">3.4.22.-</ecNumber>
    </recommendedName>
</protein>
<name>ARTD_METJA</name>
<evidence type="ECO:0000250" key="1">
    <source>
        <dbReference type="UniProtKB" id="D4GUZ4"/>
    </source>
</evidence>
<evidence type="ECO:0000255" key="2"/>
<evidence type="ECO:0000303" key="3">
    <source>
    </source>
</evidence>
<evidence type="ECO:0000305" key="4"/>
<evidence type="ECO:0000305" key="5">
    <source>
    </source>
</evidence>
<reference key="1">
    <citation type="journal article" date="1996" name="Science">
        <title>Complete genome sequence of the methanogenic archaeon, Methanococcus jannaschii.</title>
        <authorList>
            <person name="Bult C.J."/>
            <person name="White O."/>
            <person name="Olsen G.J."/>
            <person name="Zhou L."/>
            <person name="Fleischmann R.D."/>
            <person name="Sutton G.G."/>
            <person name="Blake J.A."/>
            <person name="FitzGerald L.M."/>
            <person name="Clayton R.A."/>
            <person name="Gocayne J.D."/>
            <person name="Kerlavage A.R."/>
            <person name="Dougherty B.A."/>
            <person name="Tomb J.-F."/>
            <person name="Adams M.D."/>
            <person name="Reich C.I."/>
            <person name="Overbeek R."/>
            <person name="Kirkness E.F."/>
            <person name="Weinstock K.G."/>
            <person name="Merrick J.M."/>
            <person name="Glodek A."/>
            <person name="Scott J.L."/>
            <person name="Geoghagen N.S.M."/>
            <person name="Weidman J.F."/>
            <person name="Fuhrmann J.L."/>
            <person name="Nguyen D."/>
            <person name="Utterback T.R."/>
            <person name="Kelley J.M."/>
            <person name="Peterson J.D."/>
            <person name="Sadow P.W."/>
            <person name="Hanna M.C."/>
            <person name="Cotton M.D."/>
            <person name="Roberts K.M."/>
            <person name="Hurst M.A."/>
            <person name="Kaine B.P."/>
            <person name="Borodovsky M."/>
            <person name="Klenk H.-P."/>
            <person name="Fraser C.M."/>
            <person name="Smith H.O."/>
            <person name="Woese C.R."/>
            <person name="Venter J.C."/>
        </authorList>
    </citation>
    <scope>NUCLEOTIDE SEQUENCE [LARGE SCALE GENOMIC DNA]</scope>
    <source>
        <strain>ATCC 43067 / DSM 2661 / JAL-1 / JCM 10045 / NBRC 100440</strain>
    </source>
</reference>
<reference key="2">
    <citation type="journal article" date="2012" name="J. Bacteriol.">
        <title>Archaeosortases and exosortases are widely distributed systems linking membrane transit with posttranslational modification.</title>
        <authorList>
            <person name="Haft D.H."/>
            <person name="Payne S.H."/>
            <person name="Selengut J.D."/>
        </authorList>
    </citation>
    <scope>NOMENCLATURE</scope>
    <scope>GENE FAMILY</scope>
</reference>
<gene>
    <name evidence="3" type="primary">artD</name>
    <name type="ordered locus">MJ1469.1</name>
</gene>